<sequence>MLKQAVEHRGGFSFENCQRNASLEHVLPGLRVPLARKTGTTIAGLVFRDGVILGADTRATNDSVVADKSCEKIHFIAPKIYCCGAGVAADTEMTTRMAASKMELHALSTGREPRVATVTRILRQTLFRYQGHVGASLIVGGVDLNGPQLYSVHPHGSYSRLPFTALGSGQDAAVALLEDRFQPNMTLEAAQELLVEAITAGILGDLGSGGSVDACVITAGGAKLQRALSSPIEPVQRAGQYRFAPGTTPVQTQEVRALTLELLEETVQAMEVE</sequence>
<proteinExistence type="evidence at transcript level"/>
<gene>
    <name type="primary">Psmb10</name>
    <name type="synonym">Lmp10</name>
    <name type="synonym">Mecl1</name>
</gene>
<keyword id="KW-0007">Acetylation</keyword>
<keyword id="KW-0963">Cytoplasm</keyword>
<keyword id="KW-0378">Hydrolase</keyword>
<keyword id="KW-0539">Nucleus</keyword>
<keyword id="KW-0597">Phosphoprotein</keyword>
<keyword id="KW-0645">Protease</keyword>
<keyword id="KW-0647">Proteasome</keyword>
<keyword id="KW-1185">Reference proteome</keyword>
<keyword id="KW-0888">Threonine protease</keyword>
<organism>
    <name type="scientific">Rattus norvegicus</name>
    <name type="common">Rat</name>
    <dbReference type="NCBI Taxonomy" id="10116"/>
    <lineage>
        <taxon>Eukaryota</taxon>
        <taxon>Metazoa</taxon>
        <taxon>Chordata</taxon>
        <taxon>Craniata</taxon>
        <taxon>Vertebrata</taxon>
        <taxon>Euteleostomi</taxon>
        <taxon>Mammalia</taxon>
        <taxon>Eutheria</taxon>
        <taxon>Euarchontoglires</taxon>
        <taxon>Glires</taxon>
        <taxon>Rodentia</taxon>
        <taxon>Myomorpha</taxon>
        <taxon>Muroidea</taxon>
        <taxon>Muridae</taxon>
        <taxon>Murinae</taxon>
        <taxon>Rattus</taxon>
    </lineage>
</organism>
<feature type="propeptide" id="PRO_0000391410" description="Removed in mature form" evidence="1">
    <location>
        <begin position="1"/>
        <end position="39"/>
    </location>
</feature>
<feature type="chain" id="PRO_0000391411" description="Proteasome subunit beta type-10">
    <location>
        <begin position="40"/>
        <end position="273"/>
    </location>
</feature>
<feature type="active site" description="Nucleophile" evidence="1">
    <location>
        <position position="40"/>
    </location>
</feature>
<feature type="site" description="Cleavage; by autolysis" evidence="2">
    <location>
        <begin position="39"/>
        <end position="40"/>
    </location>
</feature>
<feature type="modified residue" description="N-acetylmethionine" evidence="3">
    <location>
        <position position="1"/>
    </location>
</feature>
<feature type="modified residue" description="Phosphoserine" evidence="3">
    <location>
        <position position="230"/>
    </location>
</feature>
<accession>Q4KM35</accession>
<reference key="1">
    <citation type="journal article" date="2004" name="Genome Res.">
        <title>The status, quality, and expansion of the NIH full-length cDNA project: the Mammalian Gene Collection (MGC).</title>
        <authorList>
            <consortium name="The MGC Project Team"/>
        </authorList>
    </citation>
    <scope>NUCLEOTIDE SEQUENCE [LARGE SCALE MRNA]</scope>
    <source>
        <tissue>Spleen</tissue>
    </source>
</reference>
<reference key="2">
    <citation type="journal article" date="2007" name="Biol. Reprod.">
        <title>Differential expression of genes encoding constitutive and inducible 20S proteasomal core subunits in the testis and epididymis of theophylline- or 1,3-dinitrobenzene-exposed rats.</title>
        <authorList>
            <person name="Tengowski M.W."/>
            <person name="Feng D."/>
            <person name="Sutovsky M."/>
            <person name="Sutovsky P."/>
        </authorList>
    </citation>
    <scope>INDUCTION BY THP AND DNP</scope>
</reference>
<dbReference type="EC" id="3.4.25.1"/>
<dbReference type="EMBL" id="BC098835">
    <property type="protein sequence ID" value="AAH98835.1"/>
    <property type="molecule type" value="mRNA"/>
</dbReference>
<dbReference type="RefSeq" id="NP_001020808.1">
    <property type="nucleotide sequence ID" value="NM_001025637.1"/>
</dbReference>
<dbReference type="SMR" id="Q4KM35"/>
<dbReference type="BioGRID" id="253721">
    <property type="interactions" value="1"/>
</dbReference>
<dbReference type="FunCoup" id="Q4KM35">
    <property type="interactions" value="165"/>
</dbReference>
<dbReference type="STRING" id="10116.ENSRNOP00000026462"/>
<dbReference type="MEROPS" id="T01.014"/>
<dbReference type="iPTMnet" id="Q4KM35"/>
<dbReference type="PhosphoSitePlus" id="Q4KM35"/>
<dbReference type="jPOST" id="Q4KM35"/>
<dbReference type="PaxDb" id="10116-ENSRNOP00000026462"/>
<dbReference type="GeneID" id="291983"/>
<dbReference type="KEGG" id="rno:291983"/>
<dbReference type="UCSC" id="RGD:1307428">
    <property type="organism name" value="rat"/>
</dbReference>
<dbReference type="AGR" id="RGD:1307428"/>
<dbReference type="CTD" id="5699"/>
<dbReference type="RGD" id="1307428">
    <property type="gene designation" value="Psmb10"/>
</dbReference>
<dbReference type="VEuPathDB" id="HostDB:ENSRNOG00000019353"/>
<dbReference type="eggNOG" id="KOG0173">
    <property type="taxonomic scope" value="Eukaryota"/>
</dbReference>
<dbReference type="HOGENOM" id="CLU_035750_3_0_1"/>
<dbReference type="InParanoid" id="Q4KM35"/>
<dbReference type="OrthoDB" id="35004at9989"/>
<dbReference type="PhylomeDB" id="Q4KM35"/>
<dbReference type="TreeFam" id="TF106222"/>
<dbReference type="Reactome" id="R-RNO-9907900">
    <property type="pathway name" value="Proteasome assembly"/>
</dbReference>
<dbReference type="PRO" id="PR:Q4KM35"/>
<dbReference type="Proteomes" id="UP000002494">
    <property type="component" value="Chromosome 19"/>
</dbReference>
<dbReference type="Bgee" id="ENSRNOG00000019494">
    <property type="expression patterns" value="Expressed in pancreas and 20 other cell types or tissues"/>
</dbReference>
<dbReference type="GO" id="GO:0005829">
    <property type="term" value="C:cytosol"/>
    <property type="evidence" value="ECO:0000318"/>
    <property type="project" value="GO_Central"/>
</dbReference>
<dbReference type="GO" id="GO:0005634">
    <property type="term" value="C:nucleus"/>
    <property type="evidence" value="ECO:0000318"/>
    <property type="project" value="GO_Central"/>
</dbReference>
<dbReference type="GO" id="GO:0005839">
    <property type="term" value="C:proteasome core complex"/>
    <property type="evidence" value="ECO:0000250"/>
    <property type="project" value="UniProtKB"/>
</dbReference>
<dbReference type="GO" id="GO:0019774">
    <property type="term" value="C:proteasome core complex, beta-subunit complex"/>
    <property type="evidence" value="ECO:0000318"/>
    <property type="project" value="GO_Central"/>
</dbReference>
<dbReference type="GO" id="GO:1990111">
    <property type="term" value="C:spermatoproteasome complex"/>
    <property type="evidence" value="ECO:0000250"/>
    <property type="project" value="UniProtKB"/>
</dbReference>
<dbReference type="GO" id="GO:0004175">
    <property type="term" value="F:endopeptidase activity"/>
    <property type="evidence" value="ECO:0000318"/>
    <property type="project" value="GO_Central"/>
</dbReference>
<dbReference type="GO" id="GO:0004298">
    <property type="term" value="F:threonine-type endopeptidase activity"/>
    <property type="evidence" value="ECO:0007669"/>
    <property type="project" value="UniProtKB-KW"/>
</dbReference>
<dbReference type="GO" id="GO:0000902">
    <property type="term" value="P:cell morphogenesis"/>
    <property type="evidence" value="ECO:0000266"/>
    <property type="project" value="RGD"/>
</dbReference>
<dbReference type="GO" id="GO:0043161">
    <property type="term" value="P:proteasome-mediated ubiquitin-dependent protein catabolic process"/>
    <property type="evidence" value="ECO:0000318"/>
    <property type="project" value="GO_Central"/>
</dbReference>
<dbReference type="GO" id="GO:0042098">
    <property type="term" value="P:T cell proliferation"/>
    <property type="evidence" value="ECO:0000266"/>
    <property type="project" value="RGD"/>
</dbReference>
<dbReference type="CDD" id="cd03763">
    <property type="entry name" value="proteasome_beta_type_7"/>
    <property type="match status" value="1"/>
</dbReference>
<dbReference type="FunFam" id="3.60.20.10:FF:000005">
    <property type="entry name" value="Proteasome subunit beta type-2"/>
    <property type="match status" value="1"/>
</dbReference>
<dbReference type="Gene3D" id="3.60.20.10">
    <property type="entry name" value="Glutamine Phosphoribosylpyrophosphate, subunit 1, domain 1"/>
    <property type="match status" value="1"/>
</dbReference>
<dbReference type="InterPro" id="IPR029055">
    <property type="entry name" value="Ntn_hydrolases_N"/>
</dbReference>
<dbReference type="InterPro" id="IPR000243">
    <property type="entry name" value="Pept_T1A_subB"/>
</dbReference>
<dbReference type="InterPro" id="IPR024689">
    <property type="entry name" value="Proteasome_bsu_C"/>
</dbReference>
<dbReference type="InterPro" id="IPR016050">
    <property type="entry name" value="Proteasome_bsu_CS"/>
</dbReference>
<dbReference type="InterPro" id="IPR001353">
    <property type="entry name" value="Proteasome_sua/b"/>
</dbReference>
<dbReference type="InterPro" id="IPR023333">
    <property type="entry name" value="Proteasome_suB-type"/>
</dbReference>
<dbReference type="PANTHER" id="PTHR32194">
    <property type="entry name" value="METALLOPROTEASE TLDD"/>
    <property type="match status" value="1"/>
</dbReference>
<dbReference type="PANTHER" id="PTHR32194:SF4">
    <property type="entry name" value="PROTEASOME SUBUNIT BETA TYPE-7"/>
    <property type="match status" value="1"/>
</dbReference>
<dbReference type="Pfam" id="PF12465">
    <property type="entry name" value="Pr_beta_C"/>
    <property type="match status" value="1"/>
</dbReference>
<dbReference type="Pfam" id="PF00227">
    <property type="entry name" value="Proteasome"/>
    <property type="match status" value="1"/>
</dbReference>
<dbReference type="PRINTS" id="PR00141">
    <property type="entry name" value="PROTEASOME"/>
</dbReference>
<dbReference type="SUPFAM" id="SSF56235">
    <property type="entry name" value="N-terminal nucleophile aminohydrolases (Ntn hydrolases)"/>
    <property type="match status" value="1"/>
</dbReference>
<dbReference type="PROSITE" id="PS00854">
    <property type="entry name" value="PROTEASOME_BETA_1"/>
    <property type="match status" value="1"/>
</dbReference>
<dbReference type="PROSITE" id="PS51476">
    <property type="entry name" value="PROTEASOME_BETA_2"/>
    <property type="match status" value="1"/>
</dbReference>
<comment type="function">
    <text evidence="1">The proteasome is a multicatalytic proteinase complex which is characterized by its ability to cleave peptides with Arg, Phe, Tyr, Leu, and Glu adjacent to the leaving group at neutral or slightly basic pH. The proteasome has an ATP-dependent proteolytic activity. This subunit is involved in antigen processing to generate class I binding peptides (By similarity).</text>
</comment>
<comment type="catalytic activity">
    <reaction>
        <text>Cleavage of peptide bonds with very broad specificity.</text>
        <dbReference type="EC" id="3.4.25.1"/>
    </reaction>
</comment>
<comment type="subunit">
    <text evidence="1">The 26S proteasome consists of a 20S proteasome core and two 19S regulatory subunits. The 20S proteasome core is composed of 28 subunits that are arranged in four stacked rings, resulting in a barrel-shaped structure. The two end rings are each formed by seven alpha subunits, and the two central rings are each formed by seven beta subunits. The catalytic chamber with the active sites is on the inside of the barrel. Component of the immunoproteasome, where it displaces the equivalent housekeeping subunit PSMB7. Component of the spermatoproteasome, a form of the proteasome specifically found in testis (By similarity).</text>
</comment>
<comment type="subcellular location">
    <subcellularLocation>
        <location>Cytoplasm</location>
    </subcellularLocation>
    <subcellularLocation>
        <location evidence="1">Nucleus</location>
    </subcellularLocation>
</comment>
<comment type="induction">
    <text evidence="5">Up-regulated by interferon gamma. Up-regulated by theophylline (THP) and down-regulated by 1,3-dinitrobenzene (DNB), two reprotoxic agents thought to induce infertility.</text>
</comment>
<comment type="PTM">
    <text evidence="2">Autocleaved. The resulting N-terminal Thr residue of the mature subunit is responsible for the nucleophile proteolytic activity.</text>
</comment>
<comment type="similarity">
    <text evidence="4">Belongs to the peptidase T1B family.</text>
</comment>
<evidence type="ECO:0000250" key="1"/>
<evidence type="ECO:0000250" key="2">
    <source>
        <dbReference type="UniProtKB" id="O35955"/>
    </source>
</evidence>
<evidence type="ECO:0000250" key="3">
    <source>
        <dbReference type="UniProtKB" id="P40306"/>
    </source>
</evidence>
<evidence type="ECO:0000255" key="4">
    <source>
        <dbReference type="PROSITE-ProRule" id="PRU00809"/>
    </source>
</evidence>
<evidence type="ECO:0000269" key="5">
    <source>
    </source>
</evidence>
<name>PSB10_RAT</name>
<protein>
    <recommendedName>
        <fullName>Proteasome subunit beta type-10</fullName>
        <ecNumber>3.4.25.1</ecNumber>
    </recommendedName>
    <alternativeName>
        <fullName>Low molecular mass protein 10</fullName>
    </alternativeName>
    <alternativeName>
        <fullName>Macropain subunit MECl-1</fullName>
    </alternativeName>
    <alternativeName>
        <fullName>Multicatalytic endopeptidase complex subunit MECl-1</fullName>
    </alternativeName>
    <alternativeName>
        <fullName>Proteasome MECl-1</fullName>
    </alternativeName>
    <alternativeName>
        <fullName>Proteasome subunit beta-2i</fullName>
    </alternativeName>
</protein>